<dbReference type="EC" id="2.7.1.35" evidence="1"/>
<dbReference type="EMBL" id="CP000394">
    <property type="protein sequence ID" value="ABI62252.1"/>
    <property type="status" value="ALT_INIT"/>
    <property type="molecule type" value="Genomic_DNA"/>
</dbReference>
<dbReference type="RefSeq" id="WP_025318908.1">
    <property type="nucleotide sequence ID" value="NC_008343.2"/>
</dbReference>
<dbReference type="SMR" id="Q0BSF0"/>
<dbReference type="STRING" id="391165.GbCGDNIH1_1354"/>
<dbReference type="KEGG" id="gbe:GbCGDNIH1_1354"/>
<dbReference type="eggNOG" id="COG2240">
    <property type="taxonomic scope" value="Bacteria"/>
</dbReference>
<dbReference type="HOGENOM" id="CLU_046496_3_1_5"/>
<dbReference type="OrthoDB" id="9800808at2"/>
<dbReference type="UniPathway" id="UPA01068">
    <property type="reaction ID" value="UER00298"/>
</dbReference>
<dbReference type="Proteomes" id="UP000001963">
    <property type="component" value="Chromosome"/>
</dbReference>
<dbReference type="GO" id="GO:0005829">
    <property type="term" value="C:cytosol"/>
    <property type="evidence" value="ECO:0007669"/>
    <property type="project" value="TreeGrafter"/>
</dbReference>
<dbReference type="GO" id="GO:0005524">
    <property type="term" value="F:ATP binding"/>
    <property type="evidence" value="ECO:0007669"/>
    <property type="project" value="UniProtKB-UniRule"/>
</dbReference>
<dbReference type="GO" id="GO:0000287">
    <property type="term" value="F:magnesium ion binding"/>
    <property type="evidence" value="ECO:0007669"/>
    <property type="project" value="UniProtKB-UniRule"/>
</dbReference>
<dbReference type="GO" id="GO:0008478">
    <property type="term" value="F:pyridoxal kinase activity"/>
    <property type="evidence" value="ECO:0007669"/>
    <property type="project" value="UniProtKB-UniRule"/>
</dbReference>
<dbReference type="GO" id="GO:0009443">
    <property type="term" value="P:pyridoxal 5'-phosphate salvage"/>
    <property type="evidence" value="ECO:0007669"/>
    <property type="project" value="UniProtKB-UniRule"/>
</dbReference>
<dbReference type="CDD" id="cd01173">
    <property type="entry name" value="pyridoxal_pyridoxamine_kinase"/>
    <property type="match status" value="1"/>
</dbReference>
<dbReference type="Gene3D" id="3.40.1190.20">
    <property type="match status" value="1"/>
</dbReference>
<dbReference type="HAMAP" id="MF_01639">
    <property type="entry name" value="PdxY"/>
    <property type="match status" value="1"/>
</dbReference>
<dbReference type="InterPro" id="IPR013749">
    <property type="entry name" value="PM/HMP-P_kinase-1"/>
</dbReference>
<dbReference type="InterPro" id="IPR004625">
    <property type="entry name" value="PyrdxlKinase"/>
</dbReference>
<dbReference type="InterPro" id="IPR023685">
    <property type="entry name" value="Pyridoxal_kinase_PdxY"/>
</dbReference>
<dbReference type="InterPro" id="IPR029056">
    <property type="entry name" value="Ribokinase-like"/>
</dbReference>
<dbReference type="NCBIfam" id="NF004398">
    <property type="entry name" value="PRK05756.1"/>
    <property type="match status" value="1"/>
</dbReference>
<dbReference type="NCBIfam" id="TIGR00687">
    <property type="entry name" value="pyridox_kin"/>
    <property type="match status" value="1"/>
</dbReference>
<dbReference type="PANTHER" id="PTHR10534">
    <property type="entry name" value="PYRIDOXAL KINASE"/>
    <property type="match status" value="1"/>
</dbReference>
<dbReference type="PANTHER" id="PTHR10534:SF2">
    <property type="entry name" value="PYRIDOXAL KINASE"/>
    <property type="match status" value="1"/>
</dbReference>
<dbReference type="Pfam" id="PF08543">
    <property type="entry name" value="Phos_pyr_kin"/>
    <property type="match status" value="1"/>
</dbReference>
<dbReference type="SUPFAM" id="SSF53613">
    <property type="entry name" value="Ribokinase-like"/>
    <property type="match status" value="1"/>
</dbReference>
<protein>
    <recommendedName>
        <fullName evidence="1">Pyridoxal kinase PdxY</fullName>
        <shortName evidence="1">PL kinase</shortName>
        <ecNumber evidence="1">2.7.1.35</ecNumber>
    </recommendedName>
</protein>
<comment type="function">
    <text evidence="1">Pyridoxal kinase involved in the salvage pathway of pyridoxal 5'-phosphate (PLP). Catalyzes the phosphorylation of pyridoxal to PLP.</text>
</comment>
<comment type="catalytic activity">
    <reaction evidence="1">
        <text>pyridoxal + ATP = pyridoxal 5'-phosphate + ADP + H(+)</text>
        <dbReference type="Rhea" id="RHEA:10224"/>
        <dbReference type="ChEBI" id="CHEBI:15378"/>
        <dbReference type="ChEBI" id="CHEBI:17310"/>
        <dbReference type="ChEBI" id="CHEBI:30616"/>
        <dbReference type="ChEBI" id="CHEBI:456216"/>
        <dbReference type="ChEBI" id="CHEBI:597326"/>
        <dbReference type="EC" id="2.7.1.35"/>
    </reaction>
</comment>
<comment type="cofactor">
    <cofactor evidence="1">
        <name>Mg(2+)</name>
        <dbReference type="ChEBI" id="CHEBI:18420"/>
    </cofactor>
</comment>
<comment type="pathway">
    <text evidence="1">Cofactor metabolism; pyridoxal 5'-phosphate salvage; pyridoxal 5'-phosphate from pyridoxal: step 1/1.</text>
</comment>
<comment type="subunit">
    <text evidence="1">Homodimer.</text>
</comment>
<comment type="similarity">
    <text evidence="1">Belongs to the pyridoxine kinase family. PdxY subfamily.</text>
</comment>
<comment type="sequence caution" evidence="2">
    <conflict type="erroneous initiation">
        <sequence resource="EMBL-CDS" id="ABI62252"/>
    </conflict>
</comment>
<evidence type="ECO:0000255" key="1">
    <source>
        <dbReference type="HAMAP-Rule" id="MF_01639"/>
    </source>
</evidence>
<evidence type="ECO:0000305" key="2"/>
<reference key="1">
    <citation type="journal article" date="2007" name="J. Bacteriol.">
        <title>Genome sequence analysis of the emerging human pathogenic acetic acid bacterium Granulibacter bethesdensis.</title>
        <authorList>
            <person name="Greenberg D.E."/>
            <person name="Porcella S.F."/>
            <person name="Zelazny A.M."/>
            <person name="Virtaneva K."/>
            <person name="Sturdevant D.E."/>
            <person name="Kupko J.J. III"/>
            <person name="Barbian K.D."/>
            <person name="Babar A."/>
            <person name="Dorward D.W."/>
            <person name="Holland S.M."/>
        </authorList>
    </citation>
    <scope>NUCLEOTIDE SEQUENCE [LARGE SCALE GENOMIC DNA]</scope>
    <source>
        <strain>ATCC BAA-1260 / CGDNIH1</strain>
    </source>
</reference>
<accession>Q0BSF0</accession>
<proteinExistence type="inferred from homology"/>
<organism>
    <name type="scientific">Granulibacter bethesdensis (strain ATCC BAA-1260 / CGDNIH1)</name>
    <dbReference type="NCBI Taxonomy" id="391165"/>
    <lineage>
        <taxon>Bacteria</taxon>
        <taxon>Pseudomonadati</taxon>
        <taxon>Pseudomonadota</taxon>
        <taxon>Alphaproteobacteria</taxon>
        <taxon>Acetobacterales</taxon>
        <taxon>Acetobacteraceae</taxon>
        <taxon>Granulibacter</taxon>
    </lineage>
</organism>
<sequence length="286" mass="30628">MNILSIQSWVCYGHVGNASAVFPLQLLGAEVWAVNTVQFSNHTGYGDWTGQVFGGDDIAALMKGIADRGVLPRCDAVLSGYMGSDAIGGAILDAVASVRAANPEALYCCDPVIGDTGRGIFVRPGLPELFRDRAVPTANILTPNQFELEWLTGHHCRTLADARAAVKVLAESMIRQGPRIILVTSLHVAETPSGSLDMLVYENGRFYLLRTPLLPVSINGAGDAIAALFLFHRLDTGDARQALEKAASSVYGLLKRTAEAGSMEILTVAARQEFLTPSTCFYAQIC</sequence>
<gene>
    <name evidence="1" type="primary">pdxY</name>
    <name type="ordered locus">GbCGDNIH1_1354</name>
</gene>
<name>PDXY_GRABC</name>
<feature type="chain" id="PRO_0000269811" description="Pyridoxal kinase PdxY">
    <location>
        <begin position="1"/>
        <end position="286"/>
    </location>
</feature>
<feature type="binding site" evidence="1">
    <location>
        <position position="8"/>
    </location>
    <ligand>
        <name>substrate</name>
    </ligand>
</feature>
<feature type="binding site" evidence="1">
    <location>
        <position position="110"/>
    </location>
    <ligand>
        <name>ATP</name>
        <dbReference type="ChEBI" id="CHEBI:30616"/>
    </ligand>
</feature>
<feature type="binding site" evidence="1">
    <location>
        <position position="147"/>
    </location>
    <ligand>
        <name>ATP</name>
        <dbReference type="ChEBI" id="CHEBI:30616"/>
    </ligand>
</feature>
<feature type="binding site" evidence="1">
    <location>
        <position position="223"/>
    </location>
    <ligand>
        <name>substrate</name>
    </ligand>
</feature>
<keyword id="KW-0067">ATP-binding</keyword>
<keyword id="KW-0418">Kinase</keyword>
<keyword id="KW-0460">Magnesium</keyword>
<keyword id="KW-0547">Nucleotide-binding</keyword>
<keyword id="KW-1185">Reference proteome</keyword>
<keyword id="KW-0808">Transferase</keyword>